<name>PLSY_CHRVO</name>
<reference key="1">
    <citation type="journal article" date="2003" name="Proc. Natl. Acad. Sci. U.S.A.">
        <title>The complete genome sequence of Chromobacterium violaceum reveals remarkable and exploitable bacterial adaptability.</title>
        <authorList>
            <person name="Vasconcelos A.T.R."/>
            <person name="de Almeida D.F."/>
            <person name="Hungria M."/>
            <person name="Guimaraes C.T."/>
            <person name="Antonio R.V."/>
            <person name="Almeida F.C."/>
            <person name="de Almeida L.G.P."/>
            <person name="de Almeida R."/>
            <person name="Alves-Gomes J.A."/>
            <person name="Andrade E.M."/>
            <person name="Araripe J."/>
            <person name="de Araujo M.F.F."/>
            <person name="Astolfi-Filho S."/>
            <person name="Azevedo V."/>
            <person name="Baptista A.J."/>
            <person name="Bataus L.A.M."/>
            <person name="Batista J.S."/>
            <person name="Belo A."/>
            <person name="van den Berg C."/>
            <person name="Bogo M."/>
            <person name="Bonatto S."/>
            <person name="Bordignon J."/>
            <person name="Brigido M.M."/>
            <person name="Brito C.A."/>
            <person name="Brocchi M."/>
            <person name="Burity H.A."/>
            <person name="Camargo A.A."/>
            <person name="Cardoso D.D.P."/>
            <person name="Carneiro N.P."/>
            <person name="Carraro D.M."/>
            <person name="Carvalho C.M.B."/>
            <person name="Cascardo J.C.M."/>
            <person name="Cavada B.S."/>
            <person name="Chueire L.M.O."/>
            <person name="Creczynski-Pasa T.B."/>
            <person name="Cunha-Junior N.C."/>
            <person name="Fagundes N."/>
            <person name="Falcao C.L."/>
            <person name="Fantinatti F."/>
            <person name="Farias I.P."/>
            <person name="Felipe M.S.S."/>
            <person name="Ferrari L.P."/>
            <person name="Ferro J.A."/>
            <person name="Ferro M.I.T."/>
            <person name="Franco G.R."/>
            <person name="Freitas N.S.A."/>
            <person name="Furlan L.R."/>
            <person name="Gazzinelli R.T."/>
            <person name="Gomes E.A."/>
            <person name="Goncalves P.R."/>
            <person name="Grangeiro T.B."/>
            <person name="Grattapaglia D."/>
            <person name="Grisard E.C."/>
            <person name="Hanna E.S."/>
            <person name="Jardim S.N."/>
            <person name="Laurino J."/>
            <person name="Leoi L.C.T."/>
            <person name="Lima L.F.A."/>
            <person name="Loureiro M.F."/>
            <person name="Lyra M.C.C.P."/>
            <person name="Madeira H.M.F."/>
            <person name="Manfio G.P."/>
            <person name="Maranhao A.Q."/>
            <person name="Martins W.S."/>
            <person name="di Mauro S.M.Z."/>
            <person name="de Medeiros S.R.B."/>
            <person name="Meissner R.V."/>
            <person name="Moreira M.A.M."/>
            <person name="Nascimento F.F."/>
            <person name="Nicolas M.F."/>
            <person name="Oliveira J.G."/>
            <person name="Oliveira S.C."/>
            <person name="Paixao R.F.C."/>
            <person name="Parente J.A."/>
            <person name="Pedrosa F.O."/>
            <person name="Pena S.D.J."/>
            <person name="Pereira J.O."/>
            <person name="Pereira M."/>
            <person name="Pinto L.S.R.C."/>
            <person name="Pinto L.S."/>
            <person name="Porto J.I.R."/>
            <person name="Potrich D.P."/>
            <person name="Ramalho-Neto C.E."/>
            <person name="Reis A.M.M."/>
            <person name="Rigo L.U."/>
            <person name="Rondinelli E."/>
            <person name="Santos E.B.P."/>
            <person name="Santos F.R."/>
            <person name="Schneider M.P.C."/>
            <person name="Seuanez H.N."/>
            <person name="Silva A.M.R."/>
            <person name="da Silva A.L.C."/>
            <person name="Silva D.W."/>
            <person name="Silva R."/>
            <person name="Simoes I.C."/>
            <person name="Simon D."/>
            <person name="Soares C.M.A."/>
            <person name="Soares R.B.A."/>
            <person name="Souza E.M."/>
            <person name="Souza K.R.L."/>
            <person name="Souza R.C."/>
            <person name="Steffens M.B.R."/>
            <person name="Steindel M."/>
            <person name="Teixeira S.R."/>
            <person name="Urmenyi T."/>
            <person name="Vettore A."/>
            <person name="Wassem R."/>
            <person name="Zaha A."/>
            <person name="Simpson A.J.G."/>
        </authorList>
    </citation>
    <scope>NUCLEOTIDE SEQUENCE [LARGE SCALE GENOMIC DNA]</scope>
    <source>
        <strain>ATCC 12472 / DSM 30191 / JCM 1249 / CCUG 213 / NBRC 12614 / NCIMB 9131 / NCTC 9757 / MK</strain>
    </source>
</reference>
<accession>Q7NRU2</accession>
<feature type="chain" id="PRO_0000188345" description="Glycerol-3-phosphate acyltransferase">
    <location>
        <begin position="1"/>
        <end position="206"/>
    </location>
</feature>
<feature type="transmembrane region" description="Helical" evidence="1">
    <location>
        <begin position="4"/>
        <end position="24"/>
    </location>
</feature>
<feature type="transmembrane region" description="Helical" evidence="1">
    <location>
        <begin position="53"/>
        <end position="73"/>
    </location>
</feature>
<feature type="transmembrane region" description="Helical" evidence="1">
    <location>
        <begin position="86"/>
        <end position="106"/>
    </location>
</feature>
<feature type="transmembrane region" description="Helical" evidence="1">
    <location>
        <begin position="116"/>
        <end position="136"/>
    </location>
</feature>
<feature type="transmembrane region" description="Helical" evidence="1">
    <location>
        <begin position="137"/>
        <end position="157"/>
    </location>
</feature>
<feature type="transmembrane region" description="Helical" evidence="1">
    <location>
        <begin position="160"/>
        <end position="180"/>
    </location>
</feature>
<organism>
    <name type="scientific">Chromobacterium violaceum (strain ATCC 12472 / DSM 30191 / JCM 1249 / CCUG 213 / NBRC 12614 / NCIMB 9131 / NCTC 9757 / MK)</name>
    <dbReference type="NCBI Taxonomy" id="243365"/>
    <lineage>
        <taxon>Bacteria</taxon>
        <taxon>Pseudomonadati</taxon>
        <taxon>Pseudomonadota</taxon>
        <taxon>Betaproteobacteria</taxon>
        <taxon>Neisseriales</taxon>
        <taxon>Chromobacteriaceae</taxon>
        <taxon>Chromobacterium</taxon>
    </lineage>
</organism>
<sequence length="206" mass="21423">MTTTAFAFVLAAYLIGSLSFAVIVSKAMGMADPRSYGSGNPGATNVLRTGKKLAAALTLLGDGAKGWVAVALASWLGPRYGLGEQGIALCALAVLFGHMWPVFFGFKGGKGVATAVGILFGINPWLALAALATWLFMAFVVKISSLSAIVACVLAPVYAFFILGPHSVYFGTCIIIAIVVVHRHKSNLIKLMTGQEDKIGNKGDAG</sequence>
<protein>
    <recommendedName>
        <fullName evidence="1">Glycerol-3-phosphate acyltransferase</fullName>
    </recommendedName>
    <alternativeName>
        <fullName evidence="1">Acyl-PO4 G3P acyltransferase</fullName>
    </alternativeName>
    <alternativeName>
        <fullName evidence="1">Acyl-phosphate--glycerol-3-phosphate acyltransferase</fullName>
    </alternativeName>
    <alternativeName>
        <fullName evidence="1">G3P acyltransferase</fullName>
        <shortName evidence="1">GPAT</shortName>
        <ecNumber evidence="1">2.3.1.275</ecNumber>
    </alternativeName>
    <alternativeName>
        <fullName evidence="1">Lysophosphatidic acid synthase</fullName>
        <shortName evidence="1">LPA synthase</shortName>
    </alternativeName>
</protein>
<dbReference type="EC" id="2.3.1.275" evidence="1"/>
<dbReference type="EMBL" id="AE016825">
    <property type="protein sequence ID" value="AAQ61350.1"/>
    <property type="status" value="ALT_INIT"/>
    <property type="molecule type" value="Genomic_DNA"/>
</dbReference>
<dbReference type="RefSeq" id="WP_043596681.1">
    <property type="nucleotide sequence ID" value="NC_005085.1"/>
</dbReference>
<dbReference type="SMR" id="Q7NRU2"/>
<dbReference type="STRING" id="243365.CV_3688"/>
<dbReference type="GeneID" id="66364921"/>
<dbReference type="KEGG" id="cvi:CV_3688"/>
<dbReference type="eggNOG" id="COG0344">
    <property type="taxonomic scope" value="Bacteria"/>
</dbReference>
<dbReference type="HOGENOM" id="CLU_081254_0_0_4"/>
<dbReference type="OrthoDB" id="9777124at2"/>
<dbReference type="UniPathway" id="UPA00085"/>
<dbReference type="Proteomes" id="UP000001424">
    <property type="component" value="Chromosome"/>
</dbReference>
<dbReference type="GO" id="GO:0005886">
    <property type="term" value="C:plasma membrane"/>
    <property type="evidence" value="ECO:0007669"/>
    <property type="project" value="UniProtKB-SubCell"/>
</dbReference>
<dbReference type="GO" id="GO:0043772">
    <property type="term" value="F:acyl-phosphate glycerol-3-phosphate acyltransferase activity"/>
    <property type="evidence" value="ECO:0007669"/>
    <property type="project" value="UniProtKB-UniRule"/>
</dbReference>
<dbReference type="GO" id="GO:0008654">
    <property type="term" value="P:phospholipid biosynthetic process"/>
    <property type="evidence" value="ECO:0007669"/>
    <property type="project" value="UniProtKB-UniRule"/>
</dbReference>
<dbReference type="HAMAP" id="MF_01043">
    <property type="entry name" value="PlsY"/>
    <property type="match status" value="1"/>
</dbReference>
<dbReference type="InterPro" id="IPR003811">
    <property type="entry name" value="G3P_acylTferase_PlsY"/>
</dbReference>
<dbReference type="NCBIfam" id="TIGR00023">
    <property type="entry name" value="glycerol-3-phosphate 1-O-acyltransferase PlsY"/>
    <property type="match status" value="1"/>
</dbReference>
<dbReference type="PANTHER" id="PTHR30309:SF0">
    <property type="entry name" value="GLYCEROL-3-PHOSPHATE ACYLTRANSFERASE-RELATED"/>
    <property type="match status" value="1"/>
</dbReference>
<dbReference type="PANTHER" id="PTHR30309">
    <property type="entry name" value="INNER MEMBRANE PROTEIN YGIH"/>
    <property type="match status" value="1"/>
</dbReference>
<dbReference type="Pfam" id="PF02660">
    <property type="entry name" value="G3P_acyltransf"/>
    <property type="match status" value="1"/>
</dbReference>
<dbReference type="SMART" id="SM01207">
    <property type="entry name" value="G3P_acyltransf"/>
    <property type="match status" value="1"/>
</dbReference>
<proteinExistence type="inferred from homology"/>
<evidence type="ECO:0000255" key="1">
    <source>
        <dbReference type="HAMAP-Rule" id="MF_01043"/>
    </source>
</evidence>
<evidence type="ECO:0000305" key="2"/>
<comment type="function">
    <text evidence="1">Catalyzes the transfer of an acyl group from acyl-phosphate (acyl-PO(4)) to glycerol-3-phosphate (G3P) to form lysophosphatidic acid (LPA). This enzyme utilizes acyl-phosphate as fatty acyl donor, but not acyl-CoA or acyl-ACP.</text>
</comment>
<comment type="catalytic activity">
    <reaction evidence="1">
        <text>an acyl phosphate + sn-glycerol 3-phosphate = a 1-acyl-sn-glycero-3-phosphate + phosphate</text>
        <dbReference type="Rhea" id="RHEA:34075"/>
        <dbReference type="ChEBI" id="CHEBI:43474"/>
        <dbReference type="ChEBI" id="CHEBI:57597"/>
        <dbReference type="ChEBI" id="CHEBI:57970"/>
        <dbReference type="ChEBI" id="CHEBI:59918"/>
        <dbReference type="EC" id="2.3.1.275"/>
    </reaction>
</comment>
<comment type="pathway">
    <text evidence="1">Lipid metabolism; phospholipid metabolism.</text>
</comment>
<comment type="subunit">
    <text evidence="1">Probably interacts with PlsX.</text>
</comment>
<comment type="subcellular location">
    <subcellularLocation>
        <location evidence="1">Cell inner membrane</location>
        <topology evidence="1">Multi-pass membrane protein</topology>
    </subcellularLocation>
</comment>
<comment type="similarity">
    <text evidence="1">Belongs to the PlsY family.</text>
</comment>
<comment type="sequence caution" evidence="2">
    <conflict type="erroneous initiation">
        <sequence resource="EMBL-CDS" id="AAQ61350"/>
    </conflict>
</comment>
<gene>
    <name evidence="1" type="primary">plsY</name>
    <name type="ordered locus">CV_3688</name>
</gene>
<keyword id="KW-0997">Cell inner membrane</keyword>
<keyword id="KW-1003">Cell membrane</keyword>
<keyword id="KW-0444">Lipid biosynthesis</keyword>
<keyword id="KW-0443">Lipid metabolism</keyword>
<keyword id="KW-0472">Membrane</keyword>
<keyword id="KW-0594">Phospholipid biosynthesis</keyword>
<keyword id="KW-1208">Phospholipid metabolism</keyword>
<keyword id="KW-1185">Reference proteome</keyword>
<keyword id="KW-0808">Transferase</keyword>
<keyword id="KW-0812">Transmembrane</keyword>
<keyword id="KW-1133">Transmembrane helix</keyword>